<comment type="function">
    <text evidence="1">Catalyzes the hydrolytic cleavage of the carbon-nitrogen bond in imidazolone-5-propanoate to yield N-formimidoyl-L-glutamate. It is the third step in the universal histidine degradation pathway.</text>
</comment>
<comment type="catalytic activity">
    <reaction evidence="1">
        <text>4-imidazolone-5-propanoate + H2O = N-formimidoyl-L-glutamate</text>
        <dbReference type="Rhea" id="RHEA:23660"/>
        <dbReference type="ChEBI" id="CHEBI:15377"/>
        <dbReference type="ChEBI" id="CHEBI:58928"/>
        <dbReference type="ChEBI" id="CHEBI:77893"/>
        <dbReference type="EC" id="3.5.2.7"/>
    </reaction>
</comment>
<comment type="cofactor">
    <cofactor evidence="1">
        <name>Zn(2+)</name>
        <dbReference type="ChEBI" id="CHEBI:29105"/>
    </cofactor>
    <cofactor evidence="1">
        <name>Fe(3+)</name>
        <dbReference type="ChEBI" id="CHEBI:29034"/>
    </cofactor>
    <text evidence="1">Binds 1 zinc or iron ion per subunit.</text>
</comment>
<comment type="pathway">
    <text evidence="1">Amino-acid degradation; L-histidine degradation into L-glutamate; N-formimidoyl-L-glutamate from L-histidine: step 3/3.</text>
</comment>
<comment type="subcellular location">
    <subcellularLocation>
        <location evidence="1">Cytoplasm</location>
    </subcellularLocation>
</comment>
<comment type="similarity">
    <text evidence="1">Belongs to the metallo-dependent hydrolases superfamily. HutI family.</text>
</comment>
<protein>
    <recommendedName>
        <fullName evidence="1">Imidazolonepropionase</fullName>
        <ecNumber evidence="1">3.5.2.7</ecNumber>
    </recommendedName>
    <alternativeName>
        <fullName evidence="1">Imidazolone-5-propionate hydrolase</fullName>
    </alternativeName>
</protein>
<evidence type="ECO:0000255" key="1">
    <source>
        <dbReference type="HAMAP-Rule" id="MF_00372"/>
    </source>
</evidence>
<organism>
    <name type="scientific">Klebsiella pneumoniae subsp. pneumoniae (strain ATCC 700721 / MGH 78578)</name>
    <dbReference type="NCBI Taxonomy" id="272620"/>
    <lineage>
        <taxon>Bacteria</taxon>
        <taxon>Pseudomonadati</taxon>
        <taxon>Pseudomonadota</taxon>
        <taxon>Gammaproteobacteria</taxon>
        <taxon>Enterobacterales</taxon>
        <taxon>Enterobacteriaceae</taxon>
        <taxon>Klebsiella/Raoultella group</taxon>
        <taxon>Klebsiella</taxon>
        <taxon>Klebsiella pneumoniae complex</taxon>
    </lineage>
</organism>
<reference key="1">
    <citation type="submission" date="2006-09" db="EMBL/GenBank/DDBJ databases">
        <authorList>
            <consortium name="The Klebsiella pneumonia Genome Sequencing Project"/>
            <person name="McClelland M."/>
            <person name="Sanderson E.K."/>
            <person name="Spieth J."/>
            <person name="Clifton W.S."/>
            <person name="Latreille P."/>
            <person name="Sabo A."/>
            <person name="Pepin K."/>
            <person name="Bhonagiri V."/>
            <person name="Porwollik S."/>
            <person name="Ali J."/>
            <person name="Wilson R.K."/>
        </authorList>
    </citation>
    <scope>NUCLEOTIDE SEQUENCE [LARGE SCALE GENOMIC DNA]</scope>
    <source>
        <strain>ATCC 700721 / MGH 78578</strain>
    </source>
</reference>
<feature type="chain" id="PRO_1000007142" description="Imidazolonepropionase">
    <location>
        <begin position="1"/>
        <end position="405"/>
    </location>
</feature>
<feature type="binding site" evidence="1">
    <location>
        <position position="72"/>
    </location>
    <ligand>
        <name>Fe(3+)</name>
        <dbReference type="ChEBI" id="CHEBI:29034"/>
    </ligand>
</feature>
<feature type="binding site" evidence="1">
    <location>
        <position position="72"/>
    </location>
    <ligand>
        <name>Zn(2+)</name>
        <dbReference type="ChEBI" id="CHEBI:29105"/>
    </ligand>
</feature>
<feature type="binding site" evidence="1">
    <location>
        <position position="74"/>
    </location>
    <ligand>
        <name>Fe(3+)</name>
        <dbReference type="ChEBI" id="CHEBI:29034"/>
    </ligand>
</feature>
<feature type="binding site" evidence="1">
    <location>
        <position position="74"/>
    </location>
    <ligand>
        <name>Zn(2+)</name>
        <dbReference type="ChEBI" id="CHEBI:29105"/>
    </ligand>
</feature>
<feature type="binding site" evidence="1">
    <location>
        <position position="81"/>
    </location>
    <ligand>
        <name>4-imidazolone-5-propanoate</name>
        <dbReference type="ChEBI" id="CHEBI:77893"/>
    </ligand>
</feature>
<feature type="binding site" evidence="1">
    <location>
        <position position="144"/>
    </location>
    <ligand>
        <name>4-imidazolone-5-propanoate</name>
        <dbReference type="ChEBI" id="CHEBI:77893"/>
    </ligand>
</feature>
<feature type="binding site" evidence="1">
    <location>
        <position position="144"/>
    </location>
    <ligand>
        <name>N-formimidoyl-L-glutamate</name>
        <dbReference type="ChEBI" id="CHEBI:58928"/>
    </ligand>
</feature>
<feature type="binding site" evidence="1">
    <location>
        <position position="177"/>
    </location>
    <ligand>
        <name>4-imidazolone-5-propanoate</name>
        <dbReference type="ChEBI" id="CHEBI:77893"/>
    </ligand>
</feature>
<feature type="binding site" evidence="1">
    <location>
        <position position="242"/>
    </location>
    <ligand>
        <name>Fe(3+)</name>
        <dbReference type="ChEBI" id="CHEBI:29034"/>
    </ligand>
</feature>
<feature type="binding site" evidence="1">
    <location>
        <position position="242"/>
    </location>
    <ligand>
        <name>Zn(2+)</name>
        <dbReference type="ChEBI" id="CHEBI:29105"/>
    </ligand>
</feature>
<feature type="binding site" evidence="1">
    <location>
        <position position="245"/>
    </location>
    <ligand>
        <name>4-imidazolone-5-propanoate</name>
        <dbReference type="ChEBI" id="CHEBI:77893"/>
    </ligand>
</feature>
<feature type="binding site" evidence="1">
    <location>
        <position position="317"/>
    </location>
    <ligand>
        <name>Fe(3+)</name>
        <dbReference type="ChEBI" id="CHEBI:29034"/>
    </ligand>
</feature>
<feature type="binding site" evidence="1">
    <location>
        <position position="317"/>
    </location>
    <ligand>
        <name>Zn(2+)</name>
        <dbReference type="ChEBI" id="CHEBI:29105"/>
    </ligand>
</feature>
<feature type="binding site" evidence="1">
    <location>
        <position position="319"/>
    </location>
    <ligand>
        <name>N-formimidoyl-L-glutamate</name>
        <dbReference type="ChEBI" id="CHEBI:58928"/>
    </ligand>
</feature>
<feature type="binding site" evidence="1">
    <location>
        <position position="321"/>
    </location>
    <ligand>
        <name>N-formimidoyl-L-glutamate</name>
        <dbReference type="ChEBI" id="CHEBI:58928"/>
    </ligand>
</feature>
<feature type="binding site" evidence="1">
    <location>
        <position position="322"/>
    </location>
    <ligand>
        <name>4-imidazolone-5-propanoate</name>
        <dbReference type="ChEBI" id="CHEBI:77893"/>
    </ligand>
</feature>
<sequence length="405" mass="44156">MTEATSELVIWRNGRLATLNPDHAQPYGLLERHALLVRDGRIAAIVAEDDVPSGRSIDLEGRLVTPGLIDCHTHLVFGGSRAQEWEQRLNGVSYQTISASGGGINSTVRATRDSSEAELLALAQPRLERLLREGVTTLEIKSGYGLDLPNERKMLRVARQLADHNGVELSATLLSAHATPPEYQGDADGYITLVCETILPTLWQEGLFESVDVFCENVGFSPQQTERVFQAAQALGIPVKGHVEQLSSLGGAQLVSRYHGLSADHIEYLTEEGVAAMRESGTVAALLPGAFYFLNETRKPPVELLRKYQVPMAVATDFNPGTSPFASLHLAMNMACVKFGLTPEEAWAGVTRHAARALGRQASHGQLAPGFVANFAIWDAEHPVEMVYEPGRSPLWHRVVQGELQ</sequence>
<proteinExistence type="inferred from homology"/>
<keyword id="KW-0963">Cytoplasm</keyword>
<keyword id="KW-0369">Histidine metabolism</keyword>
<keyword id="KW-0378">Hydrolase</keyword>
<keyword id="KW-0408">Iron</keyword>
<keyword id="KW-0479">Metal-binding</keyword>
<keyword id="KW-0862">Zinc</keyword>
<accession>A6T6K7</accession>
<dbReference type="EC" id="3.5.2.7" evidence="1"/>
<dbReference type="EMBL" id="CP000647">
    <property type="protein sequence ID" value="ABR76228.1"/>
    <property type="molecule type" value="Genomic_DNA"/>
</dbReference>
<dbReference type="SMR" id="A6T6K7"/>
<dbReference type="STRING" id="272620.KPN_00792"/>
<dbReference type="jPOST" id="A6T6K7"/>
<dbReference type="PaxDb" id="272620-KPN_00792"/>
<dbReference type="EnsemblBacteria" id="ABR76228">
    <property type="protein sequence ID" value="ABR76228"/>
    <property type="gene ID" value="KPN_00792"/>
</dbReference>
<dbReference type="KEGG" id="kpn:KPN_00792"/>
<dbReference type="HOGENOM" id="CLU_041647_0_0_6"/>
<dbReference type="UniPathway" id="UPA00379">
    <property type="reaction ID" value="UER00551"/>
</dbReference>
<dbReference type="Proteomes" id="UP000000265">
    <property type="component" value="Chromosome"/>
</dbReference>
<dbReference type="GO" id="GO:0005737">
    <property type="term" value="C:cytoplasm"/>
    <property type="evidence" value="ECO:0007669"/>
    <property type="project" value="UniProtKB-SubCell"/>
</dbReference>
<dbReference type="GO" id="GO:0050480">
    <property type="term" value="F:imidazolonepropionase activity"/>
    <property type="evidence" value="ECO:0007669"/>
    <property type="project" value="UniProtKB-UniRule"/>
</dbReference>
<dbReference type="GO" id="GO:0005506">
    <property type="term" value="F:iron ion binding"/>
    <property type="evidence" value="ECO:0007669"/>
    <property type="project" value="UniProtKB-UniRule"/>
</dbReference>
<dbReference type="GO" id="GO:0008270">
    <property type="term" value="F:zinc ion binding"/>
    <property type="evidence" value="ECO:0007669"/>
    <property type="project" value="UniProtKB-UniRule"/>
</dbReference>
<dbReference type="GO" id="GO:0019556">
    <property type="term" value="P:L-histidine catabolic process to glutamate and formamide"/>
    <property type="evidence" value="ECO:0007669"/>
    <property type="project" value="UniProtKB-UniPathway"/>
</dbReference>
<dbReference type="GO" id="GO:0019557">
    <property type="term" value="P:L-histidine catabolic process to glutamate and formate"/>
    <property type="evidence" value="ECO:0007669"/>
    <property type="project" value="UniProtKB-UniPathway"/>
</dbReference>
<dbReference type="CDD" id="cd01296">
    <property type="entry name" value="Imidazolone-5PH"/>
    <property type="match status" value="1"/>
</dbReference>
<dbReference type="FunFam" id="3.20.20.140:FF:000007">
    <property type="entry name" value="Imidazolonepropionase"/>
    <property type="match status" value="1"/>
</dbReference>
<dbReference type="Gene3D" id="3.20.20.140">
    <property type="entry name" value="Metal-dependent hydrolases"/>
    <property type="match status" value="1"/>
</dbReference>
<dbReference type="Gene3D" id="2.30.40.10">
    <property type="entry name" value="Urease, subunit C, domain 1"/>
    <property type="match status" value="1"/>
</dbReference>
<dbReference type="HAMAP" id="MF_00372">
    <property type="entry name" value="HutI"/>
    <property type="match status" value="1"/>
</dbReference>
<dbReference type="InterPro" id="IPR006680">
    <property type="entry name" value="Amidohydro-rel"/>
</dbReference>
<dbReference type="InterPro" id="IPR005920">
    <property type="entry name" value="HutI"/>
</dbReference>
<dbReference type="InterPro" id="IPR011059">
    <property type="entry name" value="Metal-dep_hydrolase_composite"/>
</dbReference>
<dbReference type="InterPro" id="IPR032466">
    <property type="entry name" value="Metal_Hydrolase"/>
</dbReference>
<dbReference type="NCBIfam" id="TIGR01224">
    <property type="entry name" value="hutI"/>
    <property type="match status" value="1"/>
</dbReference>
<dbReference type="PANTHER" id="PTHR42752">
    <property type="entry name" value="IMIDAZOLONEPROPIONASE"/>
    <property type="match status" value="1"/>
</dbReference>
<dbReference type="PANTHER" id="PTHR42752:SF1">
    <property type="entry name" value="IMIDAZOLONEPROPIONASE-RELATED"/>
    <property type="match status" value="1"/>
</dbReference>
<dbReference type="Pfam" id="PF01979">
    <property type="entry name" value="Amidohydro_1"/>
    <property type="match status" value="1"/>
</dbReference>
<dbReference type="SUPFAM" id="SSF51338">
    <property type="entry name" value="Composite domain of metallo-dependent hydrolases"/>
    <property type="match status" value="1"/>
</dbReference>
<dbReference type="SUPFAM" id="SSF51556">
    <property type="entry name" value="Metallo-dependent hydrolases"/>
    <property type="match status" value="1"/>
</dbReference>
<gene>
    <name evidence="1" type="primary">hutI</name>
    <name type="ordered locus">KPN78578_07670</name>
    <name type="ORF">KPN_00792</name>
</gene>
<name>HUTI_KLEP7</name>